<protein>
    <recommendedName>
        <fullName evidence="1">Anthranilate phosphoribosyltransferase</fullName>
        <ecNumber evidence="1">2.4.2.18</ecNumber>
    </recommendedName>
</protein>
<reference key="1">
    <citation type="submission" date="2008-06" db="EMBL/GenBank/DDBJ databases">
        <title>Complete sequence of Pelodictyon phaeoclathratiforme BU-1.</title>
        <authorList>
            <consortium name="US DOE Joint Genome Institute"/>
            <person name="Lucas S."/>
            <person name="Copeland A."/>
            <person name="Lapidus A."/>
            <person name="Glavina del Rio T."/>
            <person name="Dalin E."/>
            <person name="Tice H."/>
            <person name="Bruce D."/>
            <person name="Goodwin L."/>
            <person name="Pitluck S."/>
            <person name="Schmutz J."/>
            <person name="Larimer F."/>
            <person name="Land M."/>
            <person name="Hauser L."/>
            <person name="Kyrpides N."/>
            <person name="Mikhailova N."/>
            <person name="Liu Z."/>
            <person name="Li T."/>
            <person name="Zhao F."/>
            <person name="Overmann J."/>
            <person name="Bryant D.A."/>
            <person name="Richardson P."/>
        </authorList>
    </citation>
    <scope>NUCLEOTIDE SEQUENCE [LARGE SCALE GENOMIC DNA]</scope>
    <source>
        <strain>DSM 5477 / BU-1</strain>
    </source>
</reference>
<dbReference type="EC" id="2.4.2.18" evidence="1"/>
<dbReference type="EMBL" id="CP001110">
    <property type="protein sequence ID" value="ACF43004.1"/>
    <property type="molecule type" value="Genomic_DNA"/>
</dbReference>
<dbReference type="RefSeq" id="WP_012507499.1">
    <property type="nucleotide sequence ID" value="NC_011060.1"/>
</dbReference>
<dbReference type="SMR" id="B4SE13"/>
<dbReference type="STRING" id="324925.Ppha_0709"/>
<dbReference type="KEGG" id="pph:Ppha_0709"/>
<dbReference type="eggNOG" id="COG0547">
    <property type="taxonomic scope" value="Bacteria"/>
</dbReference>
<dbReference type="HOGENOM" id="CLU_034315_2_1_10"/>
<dbReference type="OrthoDB" id="9806430at2"/>
<dbReference type="UniPathway" id="UPA00035">
    <property type="reaction ID" value="UER00041"/>
</dbReference>
<dbReference type="Proteomes" id="UP000002724">
    <property type="component" value="Chromosome"/>
</dbReference>
<dbReference type="GO" id="GO:0005829">
    <property type="term" value="C:cytosol"/>
    <property type="evidence" value="ECO:0007669"/>
    <property type="project" value="TreeGrafter"/>
</dbReference>
<dbReference type="GO" id="GO:0004048">
    <property type="term" value="F:anthranilate phosphoribosyltransferase activity"/>
    <property type="evidence" value="ECO:0007669"/>
    <property type="project" value="UniProtKB-UniRule"/>
</dbReference>
<dbReference type="GO" id="GO:0000287">
    <property type="term" value="F:magnesium ion binding"/>
    <property type="evidence" value="ECO:0007669"/>
    <property type="project" value="UniProtKB-UniRule"/>
</dbReference>
<dbReference type="GO" id="GO:0000162">
    <property type="term" value="P:L-tryptophan biosynthetic process"/>
    <property type="evidence" value="ECO:0007669"/>
    <property type="project" value="UniProtKB-UniRule"/>
</dbReference>
<dbReference type="FunFam" id="3.40.1030.10:FF:000002">
    <property type="entry name" value="Anthranilate phosphoribosyltransferase"/>
    <property type="match status" value="1"/>
</dbReference>
<dbReference type="Gene3D" id="3.40.1030.10">
    <property type="entry name" value="Nucleoside phosphorylase/phosphoribosyltransferase catalytic domain"/>
    <property type="match status" value="1"/>
</dbReference>
<dbReference type="Gene3D" id="1.20.970.10">
    <property type="entry name" value="Transferase, Pyrimidine Nucleoside Phosphorylase, Chain C"/>
    <property type="match status" value="1"/>
</dbReference>
<dbReference type="HAMAP" id="MF_00211">
    <property type="entry name" value="TrpD"/>
    <property type="match status" value="1"/>
</dbReference>
<dbReference type="InterPro" id="IPR005940">
    <property type="entry name" value="Anthranilate_Pribosyl_Tfrase"/>
</dbReference>
<dbReference type="InterPro" id="IPR000312">
    <property type="entry name" value="Glycosyl_Trfase_fam3"/>
</dbReference>
<dbReference type="InterPro" id="IPR017459">
    <property type="entry name" value="Glycosyl_Trfase_fam3_N_dom"/>
</dbReference>
<dbReference type="InterPro" id="IPR036320">
    <property type="entry name" value="Glycosyl_Trfase_fam3_N_dom_sf"/>
</dbReference>
<dbReference type="InterPro" id="IPR035902">
    <property type="entry name" value="Nuc_phospho_transferase"/>
</dbReference>
<dbReference type="NCBIfam" id="TIGR01245">
    <property type="entry name" value="trpD"/>
    <property type="match status" value="1"/>
</dbReference>
<dbReference type="PANTHER" id="PTHR43285">
    <property type="entry name" value="ANTHRANILATE PHOSPHORIBOSYLTRANSFERASE"/>
    <property type="match status" value="1"/>
</dbReference>
<dbReference type="PANTHER" id="PTHR43285:SF2">
    <property type="entry name" value="ANTHRANILATE PHOSPHORIBOSYLTRANSFERASE"/>
    <property type="match status" value="1"/>
</dbReference>
<dbReference type="Pfam" id="PF02885">
    <property type="entry name" value="Glycos_trans_3N"/>
    <property type="match status" value="1"/>
</dbReference>
<dbReference type="Pfam" id="PF00591">
    <property type="entry name" value="Glycos_transf_3"/>
    <property type="match status" value="1"/>
</dbReference>
<dbReference type="SUPFAM" id="SSF52418">
    <property type="entry name" value="Nucleoside phosphorylase/phosphoribosyltransferase catalytic domain"/>
    <property type="match status" value="1"/>
</dbReference>
<dbReference type="SUPFAM" id="SSF47648">
    <property type="entry name" value="Nucleoside phosphorylase/phosphoribosyltransferase N-terminal domain"/>
    <property type="match status" value="1"/>
</dbReference>
<keyword id="KW-0028">Amino-acid biosynthesis</keyword>
<keyword id="KW-0057">Aromatic amino acid biosynthesis</keyword>
<keyword id="KW-0328">Glycosyltransferase</keyword>
<keyword id="KW-0460">Magnesium</keyword>
<keyword id="KW-0479">Metal-binding</keyword>
<keyword id="KW-1185">Reference proteome</keyword>
<keyword id="KW-0808">Transferase</keyword>
<keyword id="KW-0822">Tryptophan biosynthesis</keyword>
<proteinExistence type="inferred from homology"/>
<evidence type="ECO:0000255" key="1">
    <source>
        <dbReference type="HAMAP-Rule" id="MF_00211"/>
    </source>
</evidence>
<accession>B4SE13</accession>
<feature type="chain" id="PRO_1000099827" description="Anthranilate phosphoribosyltransferase">
    <location>
        <begin position="1"/>
        <end position="351"/>
    </location>
</feature>
<feature type="binding site" evidence="1">
    <location>
        <position position="80"/>
    </location>
    <ligand>
        <name>5-phospho-alpha-D-ribose 1-diphosphate</name>
        <dbReference type="ChEBI" id="CHEBI:58017"/>
    </ligand>
</feature>
<feature type="binding site" evidence="1">
    <location>
        <position position="80"/>
    </location>
    <ligand>
        <name>anthranilate</name>
        <dbReference type="ChEBI" id="CHEBI:16567"/>
        <label>1</label>
    </ligand>
</feature>
<feature type="binding site" evidence="1">
    <location>
        <begin position="83"/>
        <end position="84"/>
    </location>
    <ligand>
        <name>5-phospho-alpha-D-ribose 1-diphosphate</name>
        <dbReference type="ChEBI" id="CHEBI:58017"/>
    </ligand>
</feature>
<feature type="binding site" evidence="1">
    <location>
        <position position="88"/>
    </location>
    <ligand>
        <name>5-phospho-alpha-D-ribose 1-diphosphate</name>
        <dbReference type="ChEBI" id="CHEBI:58017"/>
    </ligand>
</feature>
<feature type="binding site" evidence="1">
    <location>
        <begin position="90"/>
        <end position="93"/>
    </location>
    <ligand>
        <name>5-phospho-alpha-D-ribose 1-diphosphate</name>
        <dbReference type="ChEBI" id="CHEBI:58017"/>
    </ligand>
</feature>
<feature type="binding site" evidence="1">
    <location>
        <position position="92"/>
    </location>
    <ligand>
        <name>Mg(2+)</name>
        <dbReference type="ChEBI" id="CHEBI:18420"/>
        <label>1</label>
    </ligand>
</feature>
<feature type="binding site" evidence="1">
    <location>
        <begin position="108"/>
        <end position="116"/>
    </location>
    <ligand>
        <name>5-phospho-alpha-D-ribose 1-diphosphate</name>
        <dbReference type="ChEBI" id="CHEBI:58017"/>
    </ligand>
</feature>
<feature type="binding site" evidence="1">
    <location>
        <position position="111"/>
    </location>
    <ligand>
        <name>anthranilate</name>
        <dbReference type="ChEBI" id="CHEBI:16567"/>
        <label>1</label>
    </ligand>
</feature>
<feature type="binding site" evidence="1">
    <location>
        <position position="120"/>
    </location>
    <ligand>
        <name>5-phospho-alpha-D-ribose 1-diphosphate</name>
        <dbReference type="ChEBI" id="CHEBI:58017"/>
    </ligand>
</feature>
<feature type="binding site" evidence="1">
    <location>
        <position position="166"/>
    </location>
    <ligand>
        <name>anthranilate</name>
        <dbReference type="ChEBI" id="CHEBI:16567"/>
        <label>2</label>
    </ligand>
</feature>
<feature type="binding site" evidence="1">
    <location>
        <position position="229"/>
    </location>
    <ligand>
        <name>Mg(2+)</name>
        <dbReference type="ChEBI" id="CHEBI:18420"/>
        <label>2</label>
    </ligand>
</feature>
<feature type="binding site" evidence="1">
    <location>
        <position position="230"/>
    </location>
    <ligand>
        <name>Mg(2+)</name>
        <dbReference type="ChEBI" id="CHEBI:18420"/>
        <label>1</label>
    </ligand>
</feature>
<feature type="binding site" evidence="1">
    <location>
        <position position="230"/>
    </location>
    <ligand>
        <name>Mg(2+)</name>
        <dbReference type="ChEBI" id="CHEBI:18420"/>
        <label>2</label>
    </ligand>
</feature>
<name>TRPD_PELPB</name>
<comment type="function">
    <text evidence="1">Catalyzes the transfer of the phosphoribosyl group of 5-phosphorylribose-1-pyrophosphate (PRPP) to anthranilate to yield N-(5'-phosphoribosyl)-anthranilate (PRA).</text>
</comment>
<comment type="catalytic activity">
    <reaction evidence="1">
        <text>N-(5-phospho-beta-D-ribosyl)anthranilate + diphosphate = 5-phospho-alpha-D-ribose 1-diphosphate + anthranilate</text>
        <dbReference type="Rhea" id="RHEA:11768"/>
        <dbReference type="ChEBI" id="CHEBI:16567"/>
        <dbReference type="ChEBI" id="CHEBI:18277"/>
        <dbReference type="ChEBI" id="CHEBI:33019"/>
        <dbReference type="ChEBI" id="CHEBI:58017"/>
        <dbReference type="EC" id="2.4.2.18"/>
    </reaction>
</comment>
<comment type="cofactor">
    <cofactor evidence="1">
        <name>Mg(2+)</name>
        <dbReference type="ChEBI" id="CHEBI:18420"/>
    </cofactor>
    <text evidence="1">Binds 2 magnesium ions per monomer.</text>
</comment>
<comment type="pathway">
    <text evidence="1">Amino-acid biosynthesis; L-tryptophan biosynthesis; L-tryptophan from chorismate: step 2/5.</text>
</comment>
<comment type="subunit">
    <text evidence="1">Homodimer.</text>
</comment>
<comment type="similarity">
    <text evidence="1">Belongs to the anthranilate phosphoribosyltransferase family.</text>
</comment>
<gene>
    <name evidence="1" type="primary">trpD</name>
    <name type="ordered locus">Ppha_0709</name>
</gene>
<organism>
    <name type="scientific">Pelodictyon phaeoclathratiforme (strain DSM 5477 / BU-1)</name>
    <dbReference type="NCBI Taxonomy" id="324925"/>
    <lineage>
        <taxon>Bacteria</taxon>
        <taxon>Pseudomonadati</taxon>
        <taxon>Chlorobiota</taxon>
        <taxon>Chlorobiia</taxon>
        <taxon>Chlorobiales</taxon>
        <taxon>Chlorobiaceae</taxon>
        <taxon>Chlorobium/Pelodictyon group</taxon>
        <taxon>Pelodictyon</taxon>
    </lineage>
</organism>
<sequence length="351" mass="38233">MPQKKLLQKLLAGEDFSQEEMILCMNNIMDGLFSEMVIAALLALLQKKGVTPTETAGAYYSLMEKAVTIELDENAVDTCGTGGDHAGTFNISTTASIIANSAGVRIAKHGNRSVTSSCGSADVLEALGFTIDLPPEATKELFQESGFAFLFAPLYHPSMKRVAPVRRELGIRTIFNILGPLINPARAKRQLVGVFNRELMELYTEVLLQTGARRAMIVHAMTAEGIALDEPSLNGPTHIVEIHRGTVTEHTVYPEDFGLARHSLSEIQGGERDENARIIRQILDGSAPAAHRDAALFTTAMACYVSGKARCIDDGLDIAREALESGKSEKKFNEILKINAELSRKYRSVVN</sequence>